<organism>
    <name type="scientific">Psychromonas ingrahamii (strain DSM 17664 / CCUG 51855 / 37)</name>
    <dbReference type="NCBI Taxonomy" id="357804"/>
    <lineage>
        <taxon>Bacteria</taxon>
        <taxon>Pseudomonadati</taxon>
        <taxon>Pseudomonadota</taxon>
        <taxon>Gammaproteobacteria</taxon>
        <taxon>Alteromonadales</taxon>
        <taxon>Psychromonadaceae</taxon>
        <taxon>Psychromonas</taxon>
    </lineage>
</organism>
<dbReference type="EC" id="3.1.26.4" evidence="1"/>
<dbReference type="EMBL" id="CP000510">
    <property type="protein sequence ID" value="ABM02351.1"/>
    <property type="status" value="ALT_INIT"/>
    <property type="molecule type" value="Genomic_DNA"/>
</dbReference>
<dbReference type="RefSeq" id="WP_041765839.1">
    <property type="nucleotide sequence ID" value="NC_008709.1"/>
</dbReference>
<dbReference type="SMR" id="A1SS86"/>
<dbReference type="STRING" id="357804.Ping_0496"/>
<dbReference type="KEGG" id="pin:Ping_0496"/>
<dbReference type="eggNOG" id="COG0328">
    <property type="taxonomic scope" value="Bacteria"/>
</dbReference>
<dbReference type="HOGENOM" id="CLU_030894_6_0_6"/>
<dbReference type="OrthoDB" id="7845843at2"/>
<dbReference type="Proteomes" id="UP000000639">
    <property type="component" value="Chromosome"/>
</dbReference>
<dbReference type="GO" id="GO:0005737">
    <property type="term" value="C:cytoplasm"/>
    <property type="evidence" value="ECO:0007669"/>
    <property type="project" value="UniProtKB-SubCell"/>
</dbReference>
<dbReference type="GO" id="GO:0000287">
    <property type="term" value="F:magnesium ion binding"/>
    <property type="evidence" value="ECO:0007669"/>
    <property type="project" value="UniProtKB-UniRule"/>
</dbReference>
<dbReference type="GO" id="GO:0003676">
    <property type="term" value="F:nucleic acid binding"/>
    <property type="evidence" value="ECO:0007669"/>
    <property type="project" value="InterPro"/>
</dbReference>
<dbReference type="GO" id="GO:0004523">
    <property type="term" value="F:RNA-DNA hybrid ribonuclease activity"/>
    <property type="evidence" value="ECO:0007669"/>
    <property type="project" value="UniProtKB-UniRule"/>
</dbReference>
<dbReference type="GO" id="GO:0043137">
    <property type="term" value="P:DNA replication, removal of RNA primer"/>
    <property type="evidence" value="ECO:0007669"/>
    <property type="project" value="TreeGrafter"/>
</dbReference>
<dbReference type="CDD" id="cd09278">
    <property type="entry name" value="RNase_HI_prokaryote_like"/>
    <property type="match status" value="1"/>
</dbReference>
<dbReference type="FunFam" id="3.30.420.10:FF:000008">
    <property type="entry name" value="Ribonuclease H"/>
    <property type="match status" value="1"/>
</dbReference>
<dbReference type="Gene3D" id="3.30.420.10">
    <property type="entry name" value="Ribonuclease H-like superfamily/Ribonuclease H"/>
    <property type="match status" value="1"/>
</dbReference>
<dbReference type="HAMAP" id="MF_00042">
    <property type="entry name" value="RNase_H"/>
    <property type="match status" value="1"/>
</dbReference>
<dbReference type="InterPro" id="IPR050092">
    <property type="entry name" value="RNase_H"/>
</dbReference>
<dbReference type="InterPro" id="IPR012337">
    <property type="entry name" value="RNaseH-like_sf"/>
</dbReference>
<dbReference type="InterPro" id="IPR002156">
    <property type="entry name" value="RNaseH_domain"/>
</dbReference>
<dbReference type="InterPro" id="IPR036397">
    <property type="entry name" value="RNaseH_sf"/>
</dbReference>
<dbReference type="InterPro" id="IPR022892">
    <property type="entry name" value="RNaseHI"/>
</dbReference>
<dbReference type="NCBIfam" id="NF001236">
    <property type="entry name" value="PRK00203.1"/>
    <property type="match status" value="1"/>
</dbReference>
<dbReference type="PANTHER" id="PTHR10642">
    <property type="entry name" value="RIBONUCLEASE H1"/>
    <property type="match status" value="1"/>
</dbReference>
<dbReference type="PANTHER" id="PTHR10642:SF26">
    <property type="entry name" value="RIBONUCLEASE H1"/>
    <property type="match status" value="1"/>
</dbReference>
<dbReference type="Pfam" id="PF00075">
    <property type="entry name" value="RNase_H"/>
    <property type="match status" value="1"/>
</dbReference>
<dbReference type="SUPFAM" id="SSF53098">
    <property type="entry name" value="Ribonuclease H-like"/>
    <property type="match status" value="1"/>
</dbReference>
<dbReference type="PROSITE" id="PS50879">
    <property type="entry name" value="RNASE_H_1"/>
    <property type="match status" value="1"/>
</dbReference>
<gene>
    <name evidence="1" type="primary">rnhA</name>
    <name type="ordered locus">Ping_0496</name>
</gene>
<name>RNH_PSYIN</name>
<keyword id="KW-0963">Cytoplasm</keyword>
<keyword id="KW-0255">Endonuclease</keyword>
<keyword id="KW-0378">Hydrolase</keyword>
<keyword id="KW-0460">Magnesium</keyword>
<keyword id="KW-0479">Metal-binding</keyword>
<keyword id="KW-0540">Nuclease</keyword>
<keyword id="KW-1185">Reference proteome</keyword>
<feature type="chain" id="PRO_0000332657" description="Ribonuclease H">
    <location>
        <begin position="1"/>
        <end position="153"/>
    </location>
</feature>
<feature type="domain" description="RNase H type-1" evidence="2">
    <location>
        <begin position="1"/>
        <end position="141"/>
    </location>
</feature>
<feature type="binding site" evidence="1">
    <location>
        <position position="9"/>
    </location>
    <ligand>
        <name>Mg(2+)</name>
        <dbReference type="ChEBI" id="CHEBI:18420"/>
        <label>1</label>
    </ligand>
</feature>
<feature type="binding site" evidence="1">
    <location>
        <position position="9"/>
    </location>
    <ligand>
        <name>Mg(2+)</name>
        <dbReference type="ChEBI" id="CHEBI:18420"/>
        <label>2</label>
    </ligand>
</feature>
<feature type="binding site" evidence="1">
    <location>
        <position position="47"/>
    </location>
    <ligand>
        <name>Mg(2+)</name>
        <dbReference type="ChEBI" id="CHEBI:18420"/>
        <label>1</label>
    </ligand>
</feature>
<feature type="binding site" evidence="1">
    <location>
        <position position="69"/>
    </location>
    <ligand>
        <name>Mg(2+)</name>
        <dbReference type="ChEBI" id="CHEBI:18420"/>
        <label>1</label>
    </ligand>
</feature>
<feature type="binding site" evidence="1">
    <location>
        <position position="133"/>
    </location>
    <ligand>
        <name>Mg(2+)</name>
        <dbReference type="ChEBI" id="CHEBI:18420"/>
        <label>2</label>
    </ligand>
</feature>
<accession>A1SS86</accession>
<comment type="function">
    <text evidence="1">Endonuclease that specifically degrades the RNA of RNA-DNA hybrids.</text>
</comment>
<comment type="catalytic activity">
    <reaction evidence="1">
        <text>Endonucleolytic cleavage to 5'-phosphomonoester.</text>
        <dbReference type="EC" id="3.1.26.4"/>
    </reaction>
</comment>
<comment type="cofactor">
    <cofactor evidence="1">
        <name>Mg(2+)</name>
        <dbReference type="ChEBI" id="CHEBI:18420"/>
    </cofactor>
    <text evidence="1">Binds 1 Mg(2+) ion per subunit. May bind a second metal ion at a regulatory site, or after substrate binding.</text>
</comment>
<comment type="subunit">
    <text evidence="1">Monomer.</text>
</comment>
<comment type="subcellular location">
    <subcellularLocation>
        <location evidence="1">Cytoplasm</location>
    </subcellularLocation>
</comment>
<comment type="similarity">
    <text evidence="1">Belongs to the RNase H family.</text>
</comment>
<comment type="sequence caution" evidence="3">
    <conflict type="erroneous initiation">
        <sequence resource="EMBL-CDS" id="ABM02351"/>
    </conflict>
</comment>
<reference key="1">
    <citation type="journal article" date="2008" name="BMC Genomics">
        <title>Genomics of an extreme psychrophile, Psychromonas ingrahamii.</title>
        <authorList>
            <person name="Riley M."/>
            <person name="Staley J.T."/>
            <person name="Danchin A."/>
            <person name="Wang T.Z."/>
            <person name="Brettin T.S."/>
            <person name="Hauser L.J."/>
            <person name="Land M.L."/>
            <person name="Thompson L.S."/>
        </authorList>
    </citation>
    <scope>NUCLEOTIDE SEQUENCE [LARGE SCALE GENOMIC DNA]</scope>
    <source>
        <strain>DSM 17664 / CCUG 51855 / 37</strain>
    </source>
</reference>
<evidence type="ECO:0000255" key="1">
    <source>
        <dbReference type="HAMAP-Rule" id="MF_00042"/>
    </source>
</evidence>
<evidence type="ECO:0000255" key="2">
    <source>
        <dbReference type="PROSITE-ProRule" id="PRU00408"/>
    </source>
</evidence>
<evidence type="ECO:0000305" key="3"/>
<proteinExistence type="inferred from homology"/>
<sequence length="153" mass="17267">MKKIQLFTDGSCLGNPGPGGYGAVMIYNEHCKELSEGFLLTTNNRMEMLACIKALQSLTEPCEVELTTDSQYVRQGITLWIHNWKKRGWKTAAKAPVKNVDLWKALDAAQEKHKVAWHWVKGHSGHPENERCDDLARRAAENNPTQEDIGYEG</sequence>
<protein>
    <recommendedName>
        <fullName evidence="1">Ribonuclease H</fullName>
        <shortName evidence="1">RNase H</shortName>
        <ecNumber evidence="1">3.1.26.4</ecNumber>
    </recommendedName>
</protein>